<sequence length="198" mass="22472">MSVKIENIQCELLSKNWFKLHKYTFDLKTDEGTSVQQIREVYDRGNGATILLYNRQQGTVVLIEQFRMPTYVNGNASGMLLEACAGLLDNDSPEACIRREAMEETGYQVDKVQKLFEAYMSPGGVTELVYFFAAEYHPDQKITDEVGVEDEVIEVVELPFHDALAMVADGRIKDGKTIMLLQYAQIHFFPSSLTPQRC</sequence>
<evidence type="ECO:0000250" key="1">
    <source>
        <dbReference type="UniProtKB" id="P37128"/>
    </source>
</evidence>
<evidence type="ECO:0000255" key="2">
    <source>
        <dbReference type="PROSITE-ProRule" id="PRU00794"/>
    </source>
</evidence>
<evidence type="ECO:0000305" key="3"/>
<proteinExistence type="inferred from homology"/>
<comment type="function">
    <text evidence="1">Nucleoside diphosphate sugar hydrolase that hydrolyzes GDP-mannose as its preferred substrate, yielding GMP and mannose-1-phosphate.</text>
</comment>
<comment type="catalytic activity">
    <reaction evidence="1">
        <text>GDP-alpha-D-mannose + H2O = alpha-D-mannose 1-phosphate + GMP + 2 H(+)</text>
        <dbReference type="Rhea" id="RHEA:27978"/>
        <dbReference type="ChEBI" id="CHEBI:15377"/>
        <dbReference type="ChEBI" id="CHEBI:15378"/>
        <dbReference type="ChEBI" id="CHEBI:57527"/>
        <dbReference type="ChEBI" id="CHEBI:58115"/>
        <dbReference type="ChEBI" id="CHEBI:58409"/>
    </reaction>
</comment>
<comment type="cofactor">
    <cofactor evidence="1">
        <name>Mg(2+)</name>
        <dbReference type="ChEBI" id="CHEBI:18420"/>
    </cofactor>
</comment>
<comment type="subunit">
    <text evidence="1">Homodimer.</text>
</comment>
<comment type="domain">
    <text evidence="1">In the dimer, the N-terminal domains are swapped between the two monomers, such that residues of both chains contribute to the active site.</text>
</comment>
<comment type="similarity">
    <text evidence="3">Belongs to the Nudix hydrolase family. NudK subfamily.</text>
</comment>
<organism>
    <name type="scientific">Yersinia pseudotuberculosis serotype O:1b (strain IP 31758)</name>
    <dbReference type="NCBI Taxonomy" id="349747"/>
    <lineage>
        <taxon>Bacteria</taxon>
        <taxon>Pseudomonadati</taxon>
        <taxon>Pseudomonadota</taxon>
        <taxon>Gammaproteobacteria</taxon>
        <taxon>Enterobacterales</taxon>
        <taxon>Yersiniaceae</taxon>
        <taxon>Yersinia</taxon>
    </lineage>
</organism>
<keyword id="KW-0378">Hydrolase</keyword>
<keyword id="KW-0460">Magnesium</keyword>
<keyword id="KW-0479">Metal-binding</keyword>
<accession>A7FG78</accession>
<reference key="1">
    <citation type="journal article" date="2007" name="PLoS Genet.">
        <title>The complete genome sequence of Yersinia pseudotuberculosis IP31758, the causative agent of Far East scarlet-like fever.</title>
        <authorList>
            <person name="Eppinger M."/>
            <person name="Rosovitz M.J."/>
            <person name="Fricke W.F."/>
            <person name="Rasko D.A."/>
            <person name="Kokorina G."/>
            <person name="Fayolle C."/>
            <person name="Lindler L.E."/>
            <person name="Carniel E."/>
            <person name="Ravel J."/>
        </authorList>
    </citation>
    <scope>NUCLEOTIDE SEQUENCE [LARGE SCALE GENOMIC DNA]</scope>
    <source>
        <strain>IP 31758</strain>
    </source>
</reference>
<feature type="chain" id="PRO_0000342510" description="GDP-mannose pyrophosphatase">
    <location>
        <begin position="1"/>
        <end position="198"/>
    </location>
</feature>
<feature type="domain" description="Nudix hydrolase" evidence="2">
    <location>
        <begin position="43"/>
        <end position="180"/>
    </location>
</feature>
<feature type="short sequence motif" description="Nudix box">
    <location>
        <begin position="86"/>
        <end position="106"/>
    </location>
</feature>
<feature type="binding site" evidence="1">
    <location>
        <begin position="38"/>
        <end position="40"/>
    </location>
    <ligand>
        <name>GDP-alpha-D-mannose</name>
        <dbReference type="ChEBI" id="CHEBI:57527"/>
        <note>ligand shared between dimeric partners</note>
    </ligand>
</feature>
<feature type="binding site" description="in other chain" evidence="1">
    <location>
        <position position="67"/>
    </location>
    <ligand>
        <name>GDP-alpha-D-mannose</name>
        <dbReference type="ChEBI" id="CHEBI:57527"/>
        <note>ligand shared between dimeric partners</note>
    </ligand>
</feature>
<feature type="binding site" description="in other chain" evidence="1">
    <location>
        <begin position="85"/>
        <end position="87"/>
    </location>
    <ligand>
        <name>GDP-alpha-D-mannose</name>
        <dbReference type="ChEBI" id="CHEBI:57527"/>
        <note>ligand shared between dimeric partners</note>
    </ligand>
</feature>
<feature type="binding site" evidence="1">
    <location>
        <position position="85"/>
    </location>
    <ligand>
        <name>Mg(2+)</name>
        <dbReference type="ChEBI" id="CHEBI:18420"/>
        <label>1</label>
    </ligand>
</feature>
<feature type="binding site" evidence="1">
    <location>
        <position position="100"/>
    </location>
    <ligand>
        <name>Mg(2+)</name>
        <dbReference type="ChEBI" id="CHEBI:18420"/>
        <label>2</label>
    </ligand>
</feature>
<feature type="binding site" description="in other chain" evidence="1">
    <location>
        <position position="104"/>
    </location>
    <ligand>
        <name>GDP-alpha-D-mannose</name>
        <dbReference type="ChEBI" id="CHEBI:57527"/>
        <note>ligand shared between dimeric partners</note>
    </ligand>
</feature>
<feature type="binding site" evidence="1">
    <location>
        <position position="104"/>
    </location>
    <ligand>
        <name>Mg(2+)</name>
        <dbReference type="ChEBI" id="CHEBI:18420"/>
        <label>1</label>
    </ligand>
</feature>
<feature type="binding site" evidence="1">
    <location>
        <position position="104"/>
    </location>
    <ligand>
        <name>Mg(2+)</name>
        <dbReference type="ChEBI" id="CHEBI:18420"/>
        <label>2</label>
    </ligand>
</feature>
<feature type="binding site" description="in other chain" evidence="1">
    <location>
        <position position="127"/>
    </location>
    <ligand>
        <name>GDP-alpha-D-mannose</name>
        <dbReference type="ChEBI" id="CHEBI:57527"/>
        <note>ligand shared between dimeric partners</note>
    </ligand>
</feature>
<feature type="binding site" description="in other chain" evidence="1">
    <location>
        <begin position="150"/>
        <end position="151"/>
    </location>
    <ligand>
        <name>GDP-alpha-D-mannose</name>
        <dbReference type="ChEBI" id="CHEBI:57527"/>
        <note>ligand shared between dimeric partners</note>
    </ligand>
</feature>
<feature type="binding site" evidence="1">
    <location>
        <position position="151"/>
    </location>
    <ligand>
        <name>Mg(2+)</name>
        <dbReference type="ChEBI" id="CHEBI:18420"/>
        <label>2</label>
    </ligand>
</feature>
<feature type="binding site" description="in other chain" evidence="1">
    <location>
        <position position="176"/>
    </location>
    <ligand>
        <name>GDP-alpha-D-mannose</name>
        <dbReference type="ChEBI" id="CHEBI:57527"/>
        <note>ligand shared between dimeric partners</note>
    </ligand>
</feature>
<name>NUDK_YERP3</name>
<dbReference type="EC" id="3.6.1.-" evidence="1"/>
<dbReference type="EMBL" id="CP000720">
    <property type="protein sequence ID" value="ABS46771.1"/>
    <property type="molecule type" value="Genomic_DNA"/>
</dbReference>
<dbReference type="RefSeq" id="WP_002208529.1">
    <property type="nucleotide sequence ID" value="NC_009708.1"/>
</dbReference>
<dbReference type="SMR" id="A7FG78"/>
<dbReference type="GeneID" id="57975667"/>
<dbReference type="KEGG" id="ypi:YpsIP31758_1276"/>
<dbReference type="HOGENOM" id="CLU_062658_6_0_6"/>
<dbReference type="Proteomes" id="UP000002412">
    <property type="component" value="Chromosome"/>
</dbReference>
<dbReference type="GO" id="GO:0005829">
    <property type="term" value="C:cytosol"/>
    <property type="evidence" value="ECO:0007669"/>
    <property type="project" value="TreeGrafter"/>
</dbReference>
<dbReference type="GO" id="GO:0016818">
    <property type="term" value="F:hydrolase activity, acting on acid anhydrides, in phosphorus-containing anhydrides"/>
    <property type="evidence" value="ECO:0007669"/>
    <property type="project" value="InterPro"/>
</dbReference>
<dbReference type="GO" id="GO:0046872">
    <property type="term" value="F:metal ion binding"/>
    <property type="evidence" value="ECO:0007669"/>
    <property type="project" value="UniProtKB-KW"/>
</dbReference>
<dbReference type="GO" id="GO:0006753">
    <property type="term" value="P:nucleoside phosphate metabolic process"/>
    <property type="evidence" value="ECO:0007669"/>
    <property type="project" value="TreeGrafter"/>
</dbReference>
<dbReference type="GO" id="GO:0019693">
    <property type="term" value="P:ribose phosphate metabolic process"/>
    <property type="evidence" value="ECO:0007669"/>
    <property type="project" value="TreeGrafter"/>
</dbReference>
<dbReference type="CDD" id="cd24157">
    <property type="entry name" value="NUDIX_GDPMK"/>
    <property type="match status" value="1"/>
</dbReference>
<dbReference type="FunFam" id="3.90.79.10:FF:000010">
    <property type="entry name" value="GDP-mannose pyrophosphatase NudK"/>
    <property type="match status" value="1"/>
</dbReference>
<dbReference type="Gene3D" id="3.90.79.10">
    <property type="entry name" value="Nucleoside Triphosphate Pyrophosphohydrolase"/>
    <property type="match status" value="1"/>
</dbReference>
<dbReference type="InterPro" id="IPR004385">
    <property type="entry name" value="NDP_pyrophosphatase"/>
</dbReference>
<dbReference type="InterPro" id="IPR015797">
    <property type="entry name" value="NUDIX_hydrolase-like_dom_sf"/>
</dbReference>
<dbReference type="InterPro" id="IPR000086">
    <property type="entry name" value="NUDIX_hydrolase_dom"/>
</dbReference>
<dbReference type="NCBIfam" id="TIGR00052">
    <property type="entry name" value="nudix-type nucleoside diphosphatase, YffH/AdpP family"/>
    <property type="match status" value="1"/>
</dbReference>
<dbReference type="NCBIfam" id="NF011585">
    <property type="entry name" value="PRK15009.1"/>
    <property type="match status" value="1"/>
</dbReference>
<dbReference type="PANTHER" id="PTHR11839:SF18">
    <property type="entry name" value="NUDIX HYDROLASE DOMAIN-CONTAINING PROTEIN"/>
    <property type="match status" value="1"/>
</dbReference>
<dbReference type="PANTHER" id="PTHR11839">
    <property type="entry name" value="UDP/ADP-SUGAR PYROPHOSPHATASE"/>
    <property type="match status" value="1"/>
</dbReference>
<dbReference type="Pfam" id="PF00293">
    <property type="entry name" value="NUDIX"/>
    <property type="match status" value="1"/>
</dbReference>
<dbReference type="SUPFAM" id="SSF55811">
    <property type="entry name" value="Nudix"/>
    <property type="match status" value="1"/>
</dbReference>
<dbReference type="PROSITE" id="PS51462">
    <property type="entry name" value="NUDIX"/>
    <property type="match status" value="1"/>
</dbReference>
<protein>
    <recommendedName>
        <fullName>GDP-mannose pyrophosphatase</fullName>
        <ecNumber evidence="1">3.6.1.-</ecNumber>
    </recommendedName>
    <alternativeName>
        <fullName>GDP-mannose hydrolase</fullName>
    </alternativeName>
    <alternativeName>
        <fullName>GDPMK</fullName>
    </alternativeName>
</protein>
<gene>
    <name type="primary">nudK</name>
    <name type="ordered locus">YpsIP31758_1276</name>
</gene>